<name>CEMA_OLTVI</name>
<geneLocation type="chloroplast"/>
<sequence length="352" mass="40050">MDSESQLLEGAVEKIGLIPRSIIRTINRFQQQLFPDAVEYFIQEFRVSRSQVLVSLQCLLTLIIIPLFIHFFAKTVFLTPCIEYVWNTYKTDIFLNSYQQEQALTEMRNFEEILYFDLLVQSNEEPVTQEGLPFTFLQHSQGSVDEEKTTAPITAYAVSNMGNPETATIAPQHLHGSVGGKLESEFRFTNPSFVGKNNVTGATTITAAIPLQKKLVDLAQSANKQSIAALTNLFADLLTLFSLIILFIRLKSQIIILKSFLIETFYSLNDTTKSFMLIFSTDLLVGFHSPRGWEIFLDFILSRFGLPHDENIILLFVATFPVLLDSVIKYWIFRYLNKISPSTVATYHAMIE</sequence>
<comment type="function">
    <text evidence="1">Contributes to K(+)/H(+) antiport activity by supporting proton efflux to control proton extrusion and homeostasis in chloroplasts in a light-dependent manner to modulate photosynthesis. Prevents excessive induction of non-photochemical quenching (NPQ) under continuous-light conditions. Indirectly promotes efficient inorganic carbon uptake into chloroplasts.</text>
</comment>
<comment type="catalytic activity">
    <reaction evidence="1">
        <text>K(+)(in) + H(+)(out) = K(+)(out) + H(+)(in)</text>
        <dbReference type="Rhea" id="RHEA:29467"/>
        <dbReference type="ChEBI" id="CHEBI:15378"/>
        <dbReference type="ChEBI" id="CHEBI:29103"/>
    </reaction>
</comment>
<comment type="subcellular location">
    <subcellularLocation>
        <location evidence="1">Plastid</location>
        <location evidence="1">Chloroplast inner membrane</location>
        <topology evidence="1">Multi-pass membrane protein</topology>
    </subcellularLocation>
</comment>
<comment type="similarity">
    <text evidence="1 2">Belongs to the CemA family.</text>
</comment>
<reference key="1">
    <citation type="journal article" date="2006" name="BMC Biol.">
        <title>The complete chloroplast DNA sequence of the green alga Oltmannsiellopsis viridis reveals a distinctive quadripartite architecture in the chloroplast genome of early diverging ulvophytes.</title>
        <authorList>
            <person name="Pombert J.-F."/>
            <person name="Lemieux C."/>
            <person name="Turmel M."/>
        </authorList>
    </citation>
    <scope>NUCLEOTIDE SEQUENCE [LARGE SCALE GENOMIC DNA]</scope>
</reference>
<evidence type="ECO:0000255" key="1">
    <source>
        <dbReference type="HAMAP-Rule" id="MF_01308"/>
    </source>
</evidence>
<evidence type="ECO:0000305" key="2"/>
<accession>Q20EU1</accession>
<keyword id="KW-0050">Antiport</keyword>
<keyword id="KW-0150">Chloroplast</keyword>
<keyword id="KW-0375">Hydrogen ion transport</keyword>
<keyword id="KW-0406">Ion transport</keyword>
<keyword id="KW-0472">Membrane</keyword>
<keyword id="KW-0934">Plastid</keyword>
<keyword id="KW-1001">Plastid inner membrane</keyword>
<keyword id="KW-0630">Potassium</keyword>
<keyword id="KW-0633">Potassium transport</keyword>
<keyword id="KW-0812">Transmembrane</keyword>
<keyword id="KW-1133">Transmembrane helix</keyword>
<keyword id="KW-0813">Transport</keyword>
<proteinExistence type="inferred from homology"/>
<dbReference type="EMBL" id="DQ291132">
    <property type="protein sequence ID" value="ABB81972.1"/>
    <property type="molecule type" value="Genomic_DNA"/>
</dbReference>
<dbReference type="RefSeq" id="YP_635904.1">
    <property type="nucleotide sequence ID" value="NC_008099.1"/>
</dbReference>
<dbReference type="GeneID" id="4100090"/>
<dbReference type="GO" id="GO:0009706">
    <property type="term" value="C:chloroplast inner membrane"/>
    <property type="evidence" value="ECO:0007669"/>
    <property type="project" value="UniProtKB-SubCell"/>
</dbReference>
<dbReference type="GO" id="GO:0015297">
    <property type="term" value="F:antiporter activity"/>
    <property type="evidence" value="ECO:0007669"/>
    <property type="project" value="UniProtKB-KW"/>
</dbReference>
<dbReference type="GO" id="GO:0015078">
    <property type="term" value="F:proton transmembrane transporter activity"/>
    <property type="evidence" value="ECO:0007669"/>
    <property type="project" value="UniProtKB-UniRule"/>
</dbReference>
<dbReference type="GO" id="GO:0006813">
    <property type="term" value="P:potassium ion transport"/>
    <property type="evidence" value="ECO:0007669"/>
    <property type="project" value="UniProtKB-UniRule"/>
</dbReference>
<dbReference type="HAMAP" id="MF_01308">
    <property type="entry name" value="CemA_PxcA"/>
    <property type="match status" value="1"/>
</dbReference>
<dbReference type="InterPro" id="IPR004282">
    <property type="entry name" value="CemA"/>
</dbReference>
<dbReference type="PANTHER" id="PTHR33650:SF2">
    <property type="entry name" value="CHLOROPLAST ENVELOPE MEMBRANE PROTEIN"/>
    <property type="match status" value="1"/>
</dbReference>
<dbReference type="PANTHER" id="PTHR33650">
    <property type="entry name" value="CHLOROPLAST ENVELOPE MEMBRANE PROTEIN-RELATED"/>
    <property type="match status" value="1"/>
</dbReference>
<dbReference type="Pfam" id="PF03040">
    <property type="entry name" value="CemA"/>
    <property type="match status" value="2"/>
</dbReference>
<organism>
    <name type="scientific">Oltmannsiellopsis viridis</name>
    <name type="common">Marine flagellate</name>
    <name type="synonym">Oltmannsiella viridis</name>
    <dbReference type="NCBI Taxonomy" id="51324"/>
    <lineage>
        <taxon>Eukaryota</taxon>
        <taxon>Viridiplantae</taxon>
        <taxon>Chlorophyta</taxon>
        <taxon>Ulvophyceae</taxon>
        <taxon>Oltmannsiellopsidales</taxon>
        <taxon>Oltmannsiellopsidaceae</taxon>
        <taxon>Oltmannsiellopsis</taxon>
    </lineage>
</organism>
<gene>
    <name evidence="1" type="primary">cemA</name>
</gene>
<protein>
    <recommendedName>
        <fullName evidence="1">Potassium/proton antiporter CemA</fullName>
    </recommendedName>
    <alternativeName>
        <fullName evidence="1">Chloroplast envelope membrane protein A</fullName>
        <shortName evidence="1">CemA</shortName>
    </alternativeName>
</protein>
<feature type="chain" id="PRO_0000293525" description="Potassium/proton antiporter CemA">
    <location>
        <begin position="1"/>
        <end position="352"/>
    </location>
</feature>
<feature type="transmembrane region" description="Helical" evidence="1">
    <location>
        <begin position="52"/>
        <end position="72"/>
    </location>
</feature>
<feature type="transmembrane region" description="Helical" evidence="1">
    <location>
        <begin position="227"/>
        <end position="247"/>
    </location>
</feature>
<feature type="transmembrane region" description="Helical" evidence="1">
    <location>
        <begin position="312"/>
        <end position="332"/>
    </location>
</feature>